<name>SCPB_MYCGA</name>
<protein>
    <recommendedName>
        <fullName evidence="1">Segregation and condensation protein B</fullName>
    </recommendedName>
</protein>
<accession>Q7NB77</accession>
<proteinExistence type="inferred from homology"/>
<sequence length="291" mass="33663">MKTKIKKITKKFNLKKDTEVKPLSTQELIEEQKEFSQAVDKLMTKKQKPTFEDIGSSIVDFETSDNDKFYESVRDAIEKTSEIVDDLDQSELTKNSYEQKELSAKAIIQAALYVAGRNGMTLQELNKILPKIHQDQLFKELEEMIYSYDQNLNFGLTIKNYGGRYKILTKAAVKKDMQRYVSERFKNPLNKSLMEVLAIVAYNQPCTRVRINEIRGVDSLSLVDNLLEKGLIVEVGRADTPGRPFLYNVSEKFFDLFGIESIDDLPQIKHFDPDSYQEGDFFDSNRYDENE</sequence>
<comment type="function">
    <text evidence="1">Participates in chromosomal partition during cell division. May act via the formation of a condensin-like complex containing Smc and ScpA that pull DNA away from mid-cell into both cell halves.</text>
</comment>
<comment type="subunit">
    <text evidence="1">Homodimer. Homodimerization may be required to stabilize the binding of ScpA to the Smc head domains. Component of a cohesin-like complex composed of ScpA, ScpB and the Smc homodimer, in which ScpA and ScpB bind to the head domain of Smc. The presence of the three proteins is required for the association of the complex with DNA.</text>
</comment>
<comment type="subcellular location">
    <subcellularLocation>
        <location evidence="1">Cytoplasm</location>
    </subcellularLocation>
    <text evidence="1">Associated with two foci at the outer edges of the nucleoid region in young cells, and at four foci within both cell halves in older cells.</text>
</comment>
<comment type="similarity">
    <text evidence="1">Belongs to the ScpB family.</text>
</comment>
<comment type="caution">
    <text evidence="2">Differs from other ScpB proteins because it has a longer N-terminus.</text>
</comment>
<reference key="1">
    <citation type="journal article" date="2003" name="Microbiology">
        <title>The complete genome sequence of the avian pathogen Mycoplasma gallisepticum strain R(low).</title>
        <authorList>
            <person name="Papazisi L."/>
            <person name="Gorton T.S."/>
            <person name="Kutish G."/>
            <person name="Markham P.F."/>
            <person name="Browning G.F."/>
            <person name="Nguyen D.K."/>
            <person name="Swartzell S."/>
            <person name="Madan A."/>
            <person name="Mahairas G."/>
            <person name="Geary S.J."/>
        </authorList>
    </citation>
    <scope>NUCLEOTIDE SEQUENCE [LARGE SCALE GENOMIC DNA]</scope>
    <source>
        <strain>R(low / passage 15 / clone 2)</strain>
    </source>
</reference>
<gene>
    <name evidence="1" type="primary">scpB</name>
    <name type="ordered locus">MYCGA4020</name>
    <name type="ORF">MGA_0035</name>
</gene>
<evidence type="ECO:0000255" key="1">
    <source>
        <dbReference type="HAMAP-Rule" id="MF_01804"/>
    </source>
</evidence>
<evidence type="ECO:0000305" key="2"/>
<keyword id="KW-0131">Cell cycle</keyword>
<keyword id="KW-0132">Cell division</keyword>
<keyword id="KW-0159">Chromosome partition</keyword>
<keyword id="KW-0963">Cytoplasm</keyword>
<keyword id="KW-1185">Reference proteome</keyword>
<organism>
    <name type="scientific">Mycoplasmoides gallisepticum (strain R(low / passage 15 / clone 2))</name>
    <name type="common">Mycoplasma gallisepticum</name>
    <dbReference type="NCBI Taxonomy" id="710127"/>
    <lineage>
        <taxon>Bacteria</taxon>
        <taxon>Bacillati</taxon>
        <taxon>Mycoplasmatota</taxon>
        <taxon>Mycoplasmoidales</taxon>
        <taxon>Mycoplasmoidaceae</taxon>
        <taxon>Mycoplasmoides</taxon>
    </lineage>
</organism>
<dbReference type="EMBL" id="AE015450">
    <property type="protein sequence ID" value="AAP56752.1"/>
    <property type="molecule type" value="Genomic_DNA"/>
</dbReference>
<dbReference type="RefSeq" id="WP_011113648.1">
    <property type="nucleotide sequence ID" value="NC_004829.2"/>
</dbReference>
<dbReference type="SMR" id="Q7NB77"/>
<dbReference type="GeneID" id="93510231"/>
<dbReference type="KEGG" id="mga:MGA_0035"/>
<dbReference type="PATRIC" id="fig|233150.7.peg.452"/>
<dbReference type="HOGENOM" id="CLU_955863_0_0_14"/>
<dbReference type="OrthoDB" id="9806226at2"/>
<dbReference type="Proteomes" id="UP000001418">
    <property type="component" value="Chromosome"/>
</dbReference>
<dbReference type="GO" id="GO:0005737">
    <property type="term" value="C:cytoplasm"/>
    <property type="evidence" value="ECO:0007669"/>
    <property type="project" value="UniProtKB-SubCell"/>
</dbReference>
<dbReference type="GO" id="GO:0051301">
    <property type="term" value="P:cell division"/>
    <property type="evidence" value="ECO:0007669"/>
    <property type="project" value="UniProtKB-KW"/>
</dbReference>
<dbReference type="GO" id="GO:0051304">
    <property type="term" value="P:chromosome separation"/>
    <property type="evidence" value="ECO:0007669"/>
    <property type="project" value="InterPro"/>
</dbReference>
<dbReference type="GO" id="GO:0006260">
    <property type="term" value="P:DNA replication"/>
    <property type="evidence" value="ECO:0007669"/>
    <property type="project" value="UniProtKB-UniRule"/>
</dbReference>
<dbReference type="Gene3D" id="1.10.10.10">
    <property type="entry name" value="Winged helix-like DNA-binding domain superfamily/Winged helix DNA-binding domain"/>
    <property type="match status" value="2"/>
</dbReference>
<dbReference type="HAMAP" id="MF_01804">
    <property type="entry name" value="ScpB"/>
    <property type="match status" value="1"/>
</dbReference>
<dbReference type="InterPro" id="IPR005234">
    <property type="entry name" value="ScpB_csome_segregation"/>
</dbReference>
<dbReference type="InterPro" id="IPR036388">
    <property type="entry name" value="WH-like_DNA-bd_sf"/>
</dbReference>
<dbReference type="InterPro" id="IPR036390">
    <property type="entry name" value="WH_DNA-bd_sf"/>
</dbReference>
<dbReference type="NCBIfam" id="TIGR00281">
    <property type="entry name" value="SMC-Scp complex subunit ScpB"/>
    <property type="match status" value="1"/>
</dbReference>
<dbReference type="PANTHER" id="PTHR34298">
    <property type="entry name" value="SEGREGATION AND CONDENSATION PROTEIN B"/>
    <property type="match status" value="1"/>
</dbReference>
<dbReference type="PANTHER" id="PTHR34298:SF2">
    <property type="entry name" value="SEGREGATION AND CONDENSATION PROTEIN B"/>
    <property type="match status" value="1"/>
</dbReference>
<dbReference type="Pfam" id="PF04079">
    <property type="entry name" value="SMC_ScpB"/>
    <property type="match status" value="1"/>
</dbReference>
<dbReference type="SUPFAM" id="SSF46785">
    <property type="entry name" value="Winged helix' DNA-binding domain"/>
    <property type="match status" value="2"/>
</dbReference>
<feature type="chain" id="PRO_0000211138" description="Segregation and condensation protein B">
    <location>
        <begin position="1"/>
        <end position="291"/>
    </location>
</feature>